<sequence length="698" mass="75018">MFKLFTARQHDKIWDFDGGIHPPEMKLQSSTVPMRIAPLPDQLIIPLQQHLGPEGELRVRAGEQVLKGQPLTVGRGRTVPVHAPTSGMITAIAPHTTAHPSGLAELCVHITPDGEDRWREQQPWADYRQRDKMALLDRIHQAGIAGLGGAGFPTASKLQGGLNGIITLIINAAECEPYITADDRLMQEHADEVITGIHILRHLLQPQQVLIGIEDNKPEAIAALQRALRGQDDIHLRVVPTKYPSGGAKQLTKILTGKEVPFGKHSSSIGVLMQNVGTVVAIKRAVIDDEPLIERVVTLTGDALSSPGNFWARIGTPVLYLLKLAGFKPQNPPMVIMGGPLMGFTLPSLDVPIVKISNCILAPAETEMGLSEPEQSCIRCGLCVDACPAGLLPQQLYWFSRGEEHEKARNHNLFDCIECGACAYVCPSNIPLVQYYRQEKAEIRALDQESARAAEAKARFEAKQARLAREKLARELRHKQAAVKLTDADQQTVDAAVSRLTRQSDGSESVINIPAGQMPDNSAVIAAREARKAQARARQAEKQQARSTEETTDVVDPRQAAVAAAIARVKAKKAAQVQHVTTDVAEAGSEAIAEDPRKAAVAAAIARVKAKKAAQAQHVTTDVAEAGSEAMAEDPRKAAVAAAIARVKAKKAAQAQHVTTDVAEAGSEAIAEDPRKAAVAAAIARVKAKKAAQAINPD</sequence>
<protein>
    <recommendedName>
        <fullName evidence="1">Ion-translocating oxidoreductase complex subunit C</fullName>
        <ecNumber evidence="1">7.-.-.-</ecNumber>
    </recommendedName>
    <alternativeName>
        <fullName evidence="1">Rnf electron transport complex subunit C</fullName>
    </alternativeName>
</protein>
<proteinExistence type="inferred from homology"/>
<gene>
    <name evidence="1" type="primary">rnfC</name>
    <name type="ordered locus">YpsIP31758_1896</name>
</gene>
<feature type="chain" id="PRO_1000060341" description="Ion-translocating oxidoreductase complex subunit C">
    <location>
        <begin position="1"/>
        <end position="698"/>
    </location>
</feature>
<feature type="domain" description="4Fe-4S ferredoxin-type 1" evidence="1">
    <location>
        <begin position="366"/>
        <end position="397"/>
    </location>
</feature>
<feature type="domain" description="4Fe-4S ferredoxin-type 2" evidence="1">
    <location>
        <begin position="407"/>
        <end position="436"/>
    </location>
</feature>
<feature type="binding site" evidence="1">
    <location>
        <position position="377"/>
    </location>
    <ligand>
        <name>[4Fe-4S] cluster</name>
        <dbReference type="ChEBI" id="CHEBI:49883"/>
        <label>1</label>
    </ligand>
</feature>
<feature type="binding site" evidence="1">
    <location>
        <position position="380"/>
    </location>
    <ligand>
        <name>[4Fe-4S] cluster</name>
        <dbReference type="ChEBI" id="CHEBI:49883"/>
        <label>1</label>
    </ligand>
</feature>
<feature type="binding site" evidence="1">
    <location>
        <position position="383"/>
    </location>
    <ligand>
        <name>[4Fe-4S] cluster</name>
        <dbReference type="ChEBI" id="CHEBI:49883"/>
        <label>1</label>
    </ligand>
</feature>
<feature type="binding site" evidence="1">
    <location>
        <position position="387"/>
    </location>
    <ligand>
        <name>[4Fe-4S] cluster</name>
        <dbReference type="ChEBI" id="CHEBI:49883"/>
        <label>2</label>
    </ligand>
</feature>
<feature type="binding site" evidence="1">
    <location>
        <position position="416"/>
    </location>
    <ligand>
        <name>[4Fe-4S] cluster</name>
        <dbReference type="ChEBI" id="CHEBI:49883"/>
        <label>2</label>
    </ligand>
</feature>
<feature type="binding site" evidence="1">
    <location>
        <position position="419"/>
    </location>
    <ligand>
        <name>[4Fe-4S] cluster</name>
        <dbReference type="ChEBI" id="CHEBI:49883"/>
        <label>2</label>
    </ligand>
</feature>
<feature type="binding site" evidence="1">
    <location>
        <position position="422"/>
    </location>
    <ligand>
        <name>[4Fe-4S] cluster</name>
        <dbReference type="ChEBI" id="CHEBI:49883"/>
        <label>2</label>
    </ligand>
</feature>
<feature type="binding site" evidence="1">
    <location>
        <position position="426"/>
    </location>
    <ligand>
        <name>[4Fe-4S] cluster</name>
        <dbReference type="ChEBI" id="CHEBI:49883"/>
        <label>1</label>
    </ligand>
</feature>
<name>RNFC_YERP3</name>
<accession>A7FHZ3</accession>
<keyword id="KW-0004">4Fe-4S</keyword>
<keyword id="KW-0997">Cell inner membrane</keyword>
<keyword id="KW-1003">Cell membrane</keyword>
<keyword id="KW-0249">Electron transport</keyword>
<keyword id="KW-0408">Iron</keyword>
<keyword id="KW-0411">Iron-sulfur</keyword>
<keyword id="KW-0472">Membrane</keyword>
<keyword id="KW-0479">Metal-binding</keyword>
<keyword id="KW-0677">Repeat</keyword>
<keyword id="KW-1278">Translocase</keyword>
<keyword id="KW-0813">Transport</keyword>
<dbReference type="EC" id="7.-.-.-" evidence="1"/>
<dbReference type="EMBL" id="CP000720">
    <property type="protein sequence ID" value="ABS46946.1"/>
    <property type="molecule type" value="Genomic_DNA"/>
</dbReference>
<dbReference type="SMR" id="A7FHZ3"/>
<dbReference type="KEGG" id="ypi:YpsIP31758_1896"/>
<dbReference type="HOGENOM" id="CLU_010808_2_1_6"/>
<dbReference type="Proteomes" id="UP000002412">
    <property type="component" value="Chromosome"/>
</dbReference>
<dbReference type="GO" id="GO:0005886">
    <property type="term" value="C:plasma membrane"/>
    <property type="evidence" value="ECO:0007669"/>
    <property type="project" value="UniProtKB-SubCell"/>
</dbReference>
<dbReference type="GO" id="GO:0051539">
    <property type="term" value="F:4 iron, 4 sulfur cluster binding"/>
    <property type="evidence" value="ECO:0007669"/>
    <property type="project" value="UniProtKB-KW"/>
</dbReference>
<dbReference type="GO" id="GO:0009055">
    <property type="term" value="F:electron transfer activity"/>
    <property type="evidence" value="ECO:0007669"/>
    <property type="project" value="InterPro"/>
</dbReference>
<dbReference type="GO" id="GO:0046872">
    <property type="term" value="F:metal ion binding"/>
    <property type="evidence" value="ECO:0007669"/>
    <property type="project" value="UniProtKB-KW"/>
</dbReference>
<dbReference type="GO" id="GO:0022900">
    <property type="term" value="P:electron transport chain"/>
    <property type="evidence" value="ECO:0007669"/>
    <property type="project" value="UniProtKB-UniRule"/>
</dbReference>
<dbReference type="Gene3D" id="3.30.70.20">
    <property type="match status" value="1"/>
</dbReference>
<dbReference type="Gene3D" id="3.40.50.11540">
    <property type="entry name" value="NADH-ubiquinone oxidoreductase 51kDa subunit"/>
    <property type="match status" value="1"/>
</dbReference>
<dbReference type="HAMAP" id="MF_00461">
    <property type="entry name" value="RsxC_RnfC"/>
    <property type="match status" value="1"/>
</dbReference>
<dbReference type="InterPro" id="IPR017896">
    <property type="entry name" value="4Fe4S_Fe-S-bd"/>
</dbReference>
<dbReference type="InterPro" id="IPR017900">
    <property type="entry name" value="4Fe4S_Fe_S_CS"/>
</dbReference>
<dbReference type="InterPro" id="IPR010208">
    <property type="entry name" value="Ion_transpt_RnfC/RsxC"/>
</dbReference>
<dbReference type="InterPro" id="IPR011538">
    <property type="entry name" value="Nuo51_FMN-bd"/>
</dbReference>
<dbReference type="InterPro" id="IPR037225">
    <property type="entry name" value="Nuo51_FMN-bd_sf"/>
</dbReference>
<dbReference type="InterPro" id="IPR026902">
    <property type="entry name" value="RnfC_N"/>
</dbReference>
<dbReference type="InterPro" id="IPR019554">
    <property type="entry name" value="Soluble_ligand-bd"/>
</dbReference>
<dbReference type="NCBIfam" id="NF003454">
    <property type="entry name" value="PRK05035.1"/>
    <property type="match status" value="1"/>
</dbReference>
<dbReference type="NCBIfam" id="TIGR01945">
    <property type="entry name" value="rnfC"/>
    <property type="match status" value="1"/>
</dbReference>
<dbReference type="PANTHER" id="PTHR43034">
    <property type="entry name" value="ION-TRANSLOCATING OXIDOREDUCTASE COMPLEX SUBUNIT C"/>
    <property type="match status" value="1"/>
</dbReference>
<dbReference type="PANTHER" id="PTHR43034:SF2">
    <property type="entry name" value="ION-TRANSLOCATING OXIDOREDUCTASE COMPLEX SUBUNIT C"/>
    <property type="match status" value="1"/>
</dbReference>
<dbReference type="Pfam" id="PF01512">
    <property type="entry name" value="Complex1_51K"/>
    <property type="match status" value="1"/>
</dbReference>
<dbReference type="Pfam" id="PF12838">
    <property type="entry name" value="Fer4_7"/>
    <property type="match status" value="1"/>
</dbReference>
<dbReference type="Pfam" id="PF13375">
    <property type="entry name" value="RnfC_N"/>
    <property type="match status" value="1"/>
</dbReference>
<dbReference type="Pfam" id="PF10531">
    <property type="entry name" value="SLBB"/>
    <property type="match status" value="1"/>
</dbReference>
<dbReference type="SUPFAM" id="SSF46548">
    <property type="entry name" value="alpha-helical ferredoxin"/>
    <property type="match status" value="1"/>
</dbReference>
<dbReference type="SUPFAM" id="SSF142019">
    <property type="entry name" value="Nqo1 FMN-binding domain-like"/>
    <property type="match status" value="1"/>
</dbReference>
<dbReference type="PROSITE" id="PS00198">
    <property type="entry name" value="4FE4S_FER_1"/>
    <property type="match status" value="2"/>
</dbReference>
<dbReference type="PROSITE" id="PS51379">
    <property type="entry name" value="4FE4S_FER_2"/>
    <property type="match status" value="2"/>
</dbReference>
<organism>
    <name type="scientific">Yersinia pseudotuberculosis serotype O:1b (strain IP 31758)</name>
    <dbReference type="NCBI Taxonomy" id="349747"/>
    <lineage>
        <taxon>Bacteria</taxon>
        <taxon>Pseudomonadati</taxon>
        <taxon>Pseudomonadota</taxon>
        <taxon>Gammaproteobacteria</taxon>
        <taxon>Enterobacterales</taxon>
        <taxon>Yersiniaceae</taxon>
        <taxon>Yersinia</taxon>
    </lineage>
</organism>
<evidence type="ECO:0000255" key="1">
    <source>
        <dbReference type="HAMAP-Rule" id="MF_00461"/>
    </source>
</evidence>
<comment type="function">
    <text evidence="1">Part of a membrane-bound complex that couples electron transfer with translocation of ions across the membrane.</text>
</comment>
<comment type="cofactor">
    <cofactor evidence="1">
        <name>[4Fe-4S] cluster</name>
        <dbReference type="ChEBI" id="CHEBI:49883"/>
    </cofactor>
    <text evidence="1">Binds 2 [4Fe-4S] clusters per subunit.</text>
</comment>
<comment type="subunit">
    <text evidence="1">The complex is composed of six subunits: RnfA, RnfB, RnfC, RnfD, RnfE and RnfG.</text>
</comment>
<comment type="subcellular location">
    <subcellularLocation>
        <location evidence="1">Cell inner membrane</location>
        <topology evidence="1">Peripheral membrane protein</topology>
    </subcellularLocation>
</comment>
<comment type="similarity">
    <text evidence="1">Belongs to the 4Fe4S bacterial-type ferredoxin family. RnfC subfamily.</text>
</comment>
<reference key="1">
    <citation type="journal article" date="2007" name="PLoS Genet.">
        <title>The complete genome sequence of Yersinia pseudotuberculosis IP31758, the causative agent of Far East scarlet-like fever.</title>
        <authorList>
            <person name="Eppinger M."/>
            <person name="Rosovitz M.J."/>
            <person name="Fricke W.F."/>
            <person name="Rasko D.A."/>
            <person name="Kokorina G."/>
            <person name="Fayolle C."/>
            <person name="Lindler L.E."/>
            <person name="Carniel E."/>
            <person name="Ravel J."/>
        </authorList>
    </citation>
    <scope>NUCLEOTIDE SEQUENCE [LARGE SCALE GENOMIC DNA]</scope>
    <source>
        <strain>IP 31758</strain>
    </source>
</reference>